<organism>
    <name type="scientific">Human adenovirus A serotype 12</name>
    <name type="common">HAdV-12</name>
    <name type="synonym">Human adenovirus 12</name>
    <dbReference type="NCBI Taxonomy" id="28282"/>
    <lineage>
        <taxon>Viruses</taxon>
        <taxon>Varidnaviria</taxon>
        <taxon>Bamfordvirae</taxon>
        <taxon>Preplasmiviricota</taxon>
        <taxon>Tectiliviricetes</taxon>
        <taxon>Rowavirales</taxon>
        <taxon>Adenoviridae</taxon>
        <taxon>Mastadenovirus</taxon>
        <taxon>Human mastadenovirus A</taxon>
    </lineage>
</organism>
<accession>P36708</accession>
<proteinExistence type="predicted"/>
<name>E411_ADE12</name>
<protein>
    <recommendedName>
        <fullName>Probable early E4 11 kDa protein</fullName>
    </recommendedName>
</protein>
<dbReference type="EMBL" id="X73487">
    <property type="protein sequence ID" value="CAA51903.1"/>
    <property type="molecule type" value="Genomic_DNA"/>
</dbReference>
<dbReference type="EMBL" id="X51800">
    <property type="protein sequence ID" value="CAB57852.1"/>
    <property type="molecule type" value="Genomic_DNA"/>
</dbReference>
<dbReference type="PIR" id="S10864">
    <property type="entry name" value="S10864"/>
</dbReference>
<dbReference type="RefSeq" id="NP_040936.1">
    <property type="nucleotide sequence ID" value="NC_001460.1"/>
</dbReference>
<dbReference type="SMR" id="P36708"/>
<dbReference type="DNASU" id="1460865"/>
<dbReference type="GeneID" id="1460865"/>
<dbReference type="Proteomes" id="UP000004993">
    <property type="component" value="Genome"/>
</dbReference>
<dbReference type="Gene3D" id="3.30.70.2870">
    <property type="entry name" value="Mastadenovirus E4 ORF3"/>
    <property type="match status" value="1"/>
</dbReference>
<dbReference type="InterPro" id="IPR009699">
    <property type="entry name" value="Mastadenovirus_E4/Orf3"/>
</dbReference>
<dbReference type="InterPro" id="IPR038368">
    <property type="entry name" value="Mastadenovirus_E4/Orf3_sf"/>
</dbReference>
<dbReference type="Pfam" id="PF06931">
    <property type="entry name" value="Adeno_E4_ORF3"/>
    <property type="match status" value="1"/>
</dbReference>
<reference key="1">
    <citation type="journal article" date="1994" name="J. Virol.">
        <title>Nucleotide sequence of human adenovirus type 12 DNA: comparative functional analysis.</title>
        <authorList>
            <person name="Sprengel J."/>
            <person name="Schmitz B."/>
            <person name="Heuss-Neitzel D."/>
            <person name="Zock C."/>
            <person name="Doerfler W."/>
        </authorList>
    </citation>
    <scope>NUCLEOTIDE SEQUENCE [LARGE SCALE GENOMIC DNA]</scope>
</reference>
<reference key="2">
    <citation type="journal article" date="1990" name="Nucleic Acids Res.">
        <title>Nucleotide sequence of the right 10% of adenovirus type 12 DNA encoding the entire region E4.</title>
        <authorList>
            <person name="Hogenkamp T."/>
            <person name="Esche H."/>
        </authorList>
    </citation>
    <scope>NUCLEOTIDE SEQUENCE [GENOMIC DNA]</scope>
</reference>
<keyword id="KW-0244">Early protein</keyword>
<keyword id="KW-1185">Reference proteome</keyword>
<sequence length="116" mass="13432">MKYCLRMAVEGALTELFNIHGLNLQNQCVQIIQQWKNENYLGMVQSGSLMIEEFHDNAFALLLFIEIRAVALLEAVVEHLENRLQFDLAVIFHQHSGGDRCHLRDLRIQILADRLD</sequence>
<feature type="chain" id="PRO_0000221772" description="Probable early E4 11 kDa protein">
    <location>
        <begin position="1"/>
        <end position="116"/>
    </location>
</feature>
<organismHost>
    <name type="scientific">Homo sapiens</name>
    <name type="common">Human</name>
    <dbReference type="NCBI Taxonomy" id="9606"/>
</organismHost>